<evidence type="ECO:0000250" key="1"/>
<evidence type="ECO:0000250" key="2">
    <source>
        <dbReference type="UniProtKB" id="Q9UKA1"/>
    </source>
</evidence>
<evidence type="ECO:0000255" key="3">
    <source>
        <dbReference type="PROSITE-ProRule" id="PRU00080"/>
    </source>
</evidence>
<evidence type="ECO:0000269" key="4">
    <source>
    </source>
</evidence>
<evidence type="ECO:0000269" key="5">
    <source>
    </source>
</evidence>
<evidence type="ECO:0000303" key="6">
    <source>
    </source>
</evidence>
<evidence type="ECO:0000303" key="7">
    <source>
    </source>
</evidence>
<evidence type="ECO:0000305" key="8"/>
<dbReference type="EMBL" id="AK029957">
    <property type="protein sequence ID" value="BAC26698.1"/>
    <property type="molecule type" value="mRNA"/>
</dbReference>
<dbReference type="EMBL" id="AK041497">
    <property type="protein sequence ID" value="BAC30964.1"/>
    <property type="molecule type" value="mRNA"/>
</dbReference>
<dbReference type="EMBL" id="AK082931">
    <property type="protein sequence ID" value="BAC38698.1"/>
    <property type="molecule type" value="mRNA"/>
</dbReference>
<dbReference type="EMBL" id="AK085100">
    <property type="protein sequence ID" value="BAC39366.1"/>
    <property type="molecule type" value="mRNA"/>
</dbReference>
<dbReference type="EMBL" id="AK088067">
    <property type="protein sequence ID" value="BAC40126.1"/>
    <property type="molecule type" value="mRNA"/>
</dbReference>
<dbReference type="EMBL" id="AK150664">
    <property type="protein sequence ID" value="BAE29748.1"/>
    <property type="molecule type" value="mRNA"/>
</dbReference>
<dbReference type="EMBL" id="AK159744">
    <property type="protein sequence ID" value="BAE35337.1"/>
    <property type="molecule type" value="mRNA"/>
</dbReference>
<dbReference type="EMBL" id="AK171783">
    <property type="protein sequence ID" value="BAE42662.1"/>
    <property type="molecule type" value="mRNA"/>
</dbReference>
<dbReference type="EMBL" id="BC047214">
    <property type="protein sequence ID" value="AAH47214.1"/>
    <property type="molecule type" value="mRNA"/>
</dbReference>
<dbReference type="EMBL" id="BC113798">
    <property type="protein sequence ID" value="AAI13799.1"/>
    <property type="molecule type" value="mRNA"/>
</dbReference>
<dbReference type="CCDS" id="CCDS19263.1">
    <molecule id="Q8C2S5-3"/>
</dbReference>
<dbReference type="CCDS" id="CCDS51489.1">
    <molecule id="Q8C2S5-1"/>
</dbReference>
<dbReference type="RefSeq" id="NP_001153435.1">
    <molecule id="Q8C2S5-1"/>
    <property type="nucleotide sequence ID" value="NM_001159963.2"/>
</dbReference>
<dbReference type="RefSeq" id="NP_001411533.1">
    <molecule id="Q8C2S5-4"/>
    <property type="nucleotide sequence ID" value="NM_001424604.1"/>
</dbReference>
<dbReference type="RefSeq" id="NP_848844.1">
    <molecule id="Q8C2S5-3"/>
    <property type="nucleotide sequence ID" value="NM_178729.5"/>
</dbReference>
<dbReference type="SMR" id="Q8C2S5"/>
<dbReference type="BioGRID" id="232476">
    <property type="interactions" value="3"/>
</dbReference>
<dbReference type="FunCoup" id="Q8C2S5">
    <property type="interactions" value="849"/>
</dbReference>
<dbReference type="STRING" id="10090.ENSMUSP00000045792"/>
<dbReference type="PhosphoSitePlus" id="Q8C2S5"/>
<dbReference type="PaxDb" id="10090-ENSMUSP00000045792"/>
<dbReference type="Antibodypedia" id="9778">
    <property type="antibodies" value="199 antibodies from 29 providers"/>
</dbReference>
<dbReference type="Ensembl" id="ENSMUST00000047857.16">
    <molecule id="Q8C2S5-1"/>
    <property type="protein sequence ID" value="ENSMUSP00000045792.10"/>
    <property type="gene ID" value="ENSMUSG00000039753.17"/>
</dbReference>
<dbReference type="Ensembl" id="ENSMUST00000087465.11">
    <molecule id="Q8C2S5-3"/>
    <property type="protein sequence ID" value="ENSMUSP00000084733.5"/>
    <property type="gene ID" value="ENSMUSG00000039753.17"/>
</dbReference>
<dbReference type="Ensembl" id="ENSMUST00000114047.10">
    <molecule id="Q8C2S5-2"/>
    <property type="protein sequence ID" value="ENSMUSP00000109681.4"/>
    <property type="gene ID" value="ENSMUSG00000039753.17"/>
</dbReference>
<dbReference type="Ensembl" id="ENSMUST00000121736.6">
    <molecule id="Q8C2S5-5"/>
    <property type="protein sequence ID" value="ENSMUSP00000112444.2"/>
    <property type="gene ID" value="ENSMUSG00000039753.17"/>
</dbReference>
<dbReference type="Ensembl" id="ENSMUST00000196483.5">
    <molecule id="Q8C2S5-4"/>
    <property type="protein sequence ID" value="ENSMUSP00000143703.2"/>
    <property type="gene ID" value="ENSMUSG00000039753.17"/>
</dbReference>
<dbReference type="GeneID" id="242960"/>
<dbReference type="KEGG" id="mmu:242960"/>
<dbReference type="UCSC" id="uc008xhu.2">
    <molecule id="Q8C2S5-1"/>
    <property type="organism name" value="mouse"/>
</dbReference>
<dbReference type="UCSC" id="uc008xhv.2">
    <molecule id="Q8C2S5-4"/>
    <property type="organism name" value="mouse"/>
</dbReference>
<dbReference type="UCSC" id="uc008xhw.2">
    <molecule id="Q8C2S5-3"/>
    <property type="organism name" value="mouse"/>
</dbReference>
<dbReference type="UCSC" id="uc008xhx.2">
    <molecule id="Q8C2S5-5"/>
    <property type="organism name" value="mouse"/>
</dbReference>
<dbReference type="AGR" id="MGI:2152883"/>
<dbReference type="CTD" id="26234"/>
<dbReference type="MGI" id="MGI:2152883">
    <property type="gene designation" value="Fbxl5"/>
</dbReference>
<dbReference type="VEuPathDB" id="HostDB:ENSMUSG00000039753"/>
<dbReference type="eggNOG" id="ENOG502QS5I">
    <property type="taxonomic scope" value="Eukaryota"/>
</dbReference>
<dbReference type="GeneTree" id="ENSGT00390000006172"/>
<dbReference type="HOGENOM" id="CLU_017503_0_0_1"/>
<dbReference type="InParanoid" id="Q8C2S5"/>
<dbReference type="OMA" id="GEMFCGH"/>
<dbReference type="OrthoDB" id="10257471at2759"/>
<dbReference type="PhylomeDB" id="Q8C2S5"/>
<dbReference type="TreeFam" id="TF331105"/>
<dbReference type="Reactome" id="R-MMU-8951664">
    <property type="pathway name" value="Neddylation"/>
</dbReference>
<dbReference type="Reactome" id="R-MMU-917937">
    <property type="pathway name" value="Iron uptake and transport"/>
</dbReference>
<dbReference type="Reactome" id="R-MMU-983168">
    <property type="pathway name" value="Antigen processing: Ubiquitination &amp; Proteasome degradation"/>
</dbReference>
<dbReference type="UniPathway" id="UPA00143"/>
<dbReference type="BioGRID-ORCS" id="242960">
    <property type="hits" value="8 hits in 77 CRISPR screens"/>
</dbReference>
<dbReference type="ChiTaRS" id="Fbxl5">
    <property type="organism name" value="mouse"/>
</dbReference>
<dbReference type="PRO" id="PR:Q8C2S5"/>
<dbReference type="Proteomes" id="UP000000589">
    <property type="component" value="Chromosome 5"/>
</dbReference>
<dbReference type="RNAct" id="Q8C2S5">
    <property type="molecule type" value="protein"/>
</dbReference>
<dbReference type="Bgee" id="ENSMUSG00000039753">
    <property type="expression patterns" value="Expressed in spermatocyte and 235 other cell types or tissues"/>
</dbReference>
<dbReference type="ExpressionAtlas" id="Q8C2S5">
    <property type="expression patterns" value="baseline and differential"/>
</dbReference>
<dbReference type="GO" id="GO:0005634">
    <property type="term" value="C:nucleus"/>
    <property type="evidence" value="ECO:0007669"/>
    <property type="project" value="UniProtKB-SubCell"/>
</dbReference>
<dbReference type="GO" id="GO:0048471">
    <property type="term" value="C:perinuclear region of cytoplasm"/>
    <property type="evidence" value="ECO:0000250"/>
    <property type="project" value="UniProtKB"/>
</dbReference>
<dbReference type="GO" id="GO:0019005">
    <property type="term" value="C:SCF ubiquitin ligase complex"/>
    <property type="evidence" value="ECO:0000250"/>
    <property type="project" value="UniProtKB"/>
</dbReference>
<dbReference type="GO" id="GO:0005506">
    <property type="term" value="F:iron ion binding"/>
    <property type="evidence" value="ECO:0000250"/>
    <property type="project" value="UniProtKB"/>
</dbReference>
<dbReference type="GO" id="GO:0051536">
    <property type="term" value="F:iron-sulfur cluster binding"/>
    <property type="evidence" value="ECO:0007669"/>
    <property type="project" value="UniProtKB-KW"/>
</dbReference>
<dbReference type="GO" id="GO:0006879">
    <property type="term" value="P:intracellular iron ion homeostasis"/>
    <property type="evidence" value="ECO:0000250"/>
    <property type="project" value="UniProtKB"/>
</dbReference>
<dbReference type="GO" id="GO:0060586">
    <property type="term" value="P:multicellular organismal-level iron ion homeostasis"/>
    <property type="evidence" value="ECO:0000315"/>
    <property type="project" value="MGI"/>
</dbReference>
<dbReference type="GO" id="GO:0045732">
    <property type="term" value="P:positive regulation of protein catabolic process"/>
    <property type="evidence" value="ECO:0000315"/>
    <property type="project" value="MGI"/>
</dbReference>
<dbReference type="GO" id="GO:0030163">
    <property type="term" value="P:protein catabolic process"/>
    <property type="evidence" value="ECO:0000315"/>
    <property type="project" value="MGI"/>
</dbReference>
<dbReference type="GO" id="GO:0016567">
    <property type="term" value="P:protein ubiquitination"/>
    <property type="evidence" value="ECO:0000250"/>
    <property type="project" value="UniProtKB"/>
</dbReference>
<dbReference type="GO" id="GO:0031146">
    <property type="term" value="P:SCF-dependent proteasomal ubiquitin-dependent protein catabolic process"/>
    <property type="evidence" value="ECO:0000250"/>
    <property type="project" value="UniProtKB"/>
</dbReference>
<dbReference type="CDD" id="cd22118">
    <property type="entry name" value="F-box_FBXL5"/>
    <property type="match status" value="1"/>
</dbReference>
<dbReference type="CDD" id="cd12109">
    <property type="entry name" value="Hr_FBXL5"/>
    <property type="match status" value="1"/>
</dbReference>
<dbReference type="FunFam" id="1.20.1280.50:FF:000007">
    <property type="entry name" value="F-box/LRR-repeat protein 5 isoform X1"/>
    <property type="match status" value="1"/>
</dbReference>
<dbReference type="FunFam" id="3.80.10.10:FF:000086">
    <property type="entry name" value="F-box/LRR-repeat protein 5 isoform X1"/>
    <property type="match status" value="1"/>
</dbReference>
<dbReference type="FunFam" id="3.80.10.10:FF:000106">
    <property type="entry name" value="F-box/LRR-repeat protein 5 isoform X1"/>
    <property type="match status" value="1"/>
</dbReference>
<dbReference type="FunFam" id="1.20.120.520:FF:000002">
    <property type="entry name" value="F-box/LRR-repeat protein 5 isoform X2"/>
    <property type="match status" value="1"/>
</dbReference>
<dbReference type="Gene3D" id="1.20.1280.50">
    <property type="match status" value="1"/>
</dbReference>
<dbReference type="Gene3D" id="1.20.120.520">
    <property type="entry name" value="nmb1532 protein domain like"/>
    <property type="match status" value="1"/>
</dbReference>
<dbReference type="Gene3D" id="3.80.10.10">
    <property type="entry name" value="Ribonuclease Inhibitor"/>
    <property type="match status" value="2"/>
</dbReference>
<dbReference type="InterPro" id="IPR036047">
    <property type="entry name" value="F-box-like_dom_sf"/>
</dbReference>
<dbReference type="InterPro" id="IPR001810">
    <property type="entry name" value="F-box_dom"/>
</dbReference>
<dbReference type="InterPro" id="IPR050648">
    <property type="entry name" value="F-box_LRR-repeat"/>
</dbReference>
<dbReference type="InterPro" id="IPR012312">
    <property type="entry name" value="Hemerythrin-like"/>
</dbReference>
<dbReference type="InterPro" id="IPR045808">
    <property type="entry name" value="Hr_FBXL5"/>
</dbReference>
<dbReference type="InterPro" id="IPR001611">
    <property type="entry name" value="Leu-rich_rpt"/>
</dbReference>
<dbReference type="InterPro" id="IPR006553">
    <property type="entry name" value="Leu-rich_rpt_Cys-con_subtyp"/>
</dbReference>
<dbReference type="InterPro" id="IPR032675">
    <property type="entry name" value="LRR_dom_sf"/>
</dbReference>
<dbReference type="PANTHER" id="PTHR13382">
    <property type="entry name" value="MITOCHONDRIAL ATP SYNTHASE COUPLING FACTOR B"/>
    <property type="match status" value="1"/>
</dbReference>
<dbReference type="Pfam" id="PF12937">
    <property type="entry name" value="F-box-like"/>
    <property type="match status" value="1"/>
</dbReference>
<dbReference type="Pfam" id="PF01814">
    <property type="entry name" value="Hemerythrin"/>
    <property type="match status" value="1"/>
</dbReference>
<dbReference type="Pfam" id="PF13516">
    <property type="entry name" value="LRR_6"/>
    <property type="match status" value="2"/>
</dbReference>
<dbReference type="SMART" id="SM00256">
    <property type="entry name" value="FBOX"/>
    <property type="match status" value="1"/>
</dbReference>
<dbReference type="SMART" id="SM00367">
    <property type="entry name" value="LRR_CC"/>
    <property type="match status" value="4"/>
</dbReference>
<dbReference type="SUPFAM" id="SSF81383">
    <property type="entry name" value="F-box domain"/>
    <property type="match status" value="1"/>
</dbReference>
<dbReference type="SUPFAM" id="SSF52047">
    <property type="entry name" value="RNI-like"/>
    <property type="match status" value="1"/>
</dbReference>
<dbReference type="PROSITE" id="PS50181">
    <property type="entry name" value="FBOX"/>
    <property type="match status" value="1"/>
</dbReference>
<reference key="1">
    <citation type="journal article" date="2005" name="Science">
        <title>The transcriptional landscape of the mammalian genome.</title>
        <authorList>
            <person name="Carninci P."/>
            <person name="Kasukawa T."/>
            <person name="Katayama S."/>
            <person name="Gough J."/>
            <person name="Frith M.C."/>
            <person name="Maeda N."/>
            <person name="Oyama R."/>
            <person name="Ravasi T."/>
            <person name="Lenhard B."/>
            <person name="Wells C."/>
            <person name="Kodzius R."/>
            <person name="Shimokawa K."/>
            <person name="Bajic V.B."/>
            <person name="Brenner S.E."/>
            <person name="Batalov S."/>
            <person name="Forrest A.R."/>
            <person name="Zavolan M."/>
            <person name="Davis M.J."/>
            <person name="Wilming L.G."/>
            <person name="Aidinis V."/>
            <person name="Allen J.E."/>
            <person name="Ambesi-Impiombato A."/>
            <person name="Apweiler R."/>
            <person name="Aturaliya R.N."/>
            <person name="Bailey T.L."/>
            <person name="Bansal M."/>
            <person name="Baxter L."/>
            <person name="Beisel K.W."/>
            <person name="Bersano T."/>
            <person name="Bono H."/>
            <person name="Chalk A.M."/>
            <person name="Chiu K.P."/>
            <person name="Choudhary V."/>
            <person name="Christoffels A."/>
            <person name="Clutterbuck D.R."/>
            <person name="Crowe M.L."/>
            <person name="Dalla E."/>
            <person name="Dalrymple B.P."/>
            <person name="de Bono B."/>
            <person name="Della Gatta G."/>
            <person name="di Bernardo D."/>
            <person name="Down T."/>
            <person name="Engstrom P."/>
            <person name="Fagiolini M."/>
            <person name="Faulkner G."/>
            <person name="Fletcher C.F."/>
            <person name="Fukushima T."/>
            <person name="Furuno M."/>
            <person name="Futaki S."/>
            <person name="Gariboldi M."/>
            <person name="Georgii-Hemming P."/>
            <person name="Gingeras T.R."/>
            <person name="Gojobori T."/>
            <person name="Green R.E."/>
            <person name="Gustincich S."/>
            <person name="Harbers M."/>
            <person name="Hayashi Y."/>
            <person name="Hensch T.K."/>
            <person name="Hirokawa N."/>
            <person name="Hill D."/>
            <person name="Huminiecki L."/>
            <person name="Iacono M."/>
            <person name="Ikeo K."/>
            <person name="Iwama A."/>
            <person name="Ishikawa T."/>
            <person name="Jakt M."/>
            <person name="Kanapin A."/>
            <person name="Katoh M."/>
            <person name="Kawasawa Y."/>
            <person name="Kelso J."/>
            <person name="Kitamura H."/>
            <person name="Kitano H."/>
            <person name="Kollias G."/>
            <person name="Krishnan S.P."/>
            <person name="Kruger A."/>
            <person name="Kummerfeld S.K."/>
            <person name="Kurochkin I.V."/>
            <person name="Lareau L.F."/>
            <person name="Lazarevic D."/>
            <person name="Lipovich L."/>
            <person name="Liu J."/>
            <person name="Liuni S."/>
            <person name="McWilliam S."/>
            <person name="Madan Babu M."/>
            <person name="Madera M."/>
            <person name="Marchionni L."/>
            <person name="Matsuda H."/>
            <person name="Matsuzawa S."/>
            <person name="Miki H."/>
            <person name="Mignone F."/>
            <person name="Miyake S."/>
            <person name="Morris K."/>
            <person name="Mottagui-Tabar S."/>
            <person name="Mulder N."/>
            <person name="Nakano N."/>
            <person name="Nakauchi H."/>
            <person name="Ng P."/>
            <person name="Nilsson R."/>
            <person name="Nishiguchi S."/>
            <person name="Nishikawa S."/>
            <person name="Nori F."/>
            <person name="Ohara O."/>
            <person name="Okazaki Y."/>
            <person name="Orlando V."/>
            <person name="Pang K.C."/>
            <person name="Pavan W.J."/>
            <person name="Pavesi G."/>
            <person name="Pesole G."/>
            <person name="Petrovsky N."/>
            <person name="Piazza S."/>
            <person name="Reed J."/>
            <person name="Reid J.F."/>
            <person name="Ring B.Z."/>
            <person name="Ringwald M."/>
            <person name="Rost B."/>
            <person name="Ruan Y."/>
            <person name="Salzberg S.L."/>
            <person name="Sandelin A."/>
            <person name="Schneider C."/>
            <person name="Schoenbach C."/>
            <person name="Sekiguchi K."/>
            <person name="Semple C.A."/>
            <person name="Seno S."/>
            <person name="Sessa L."/>
            <person name="Sheng Y."/>
            <person name="Shibata Y."/>
            <person name="Shimada H."/>
            <person name="Shimada K."/>
            <person name="Silva D."/>
            <person name="Sinclair B."/>
            <person name="Sperling S."/>
            <person name="Stupka E."/>
            <person name="Sugiura K."/>
            <person name="Sultana R."/>
            <person name="Takenaka Y."/>
            <person name="Taki K."/>
            <person name="Tammoja K."/>
            <person name="Tan S.L."/>
            <person name="Tang S."/>
            <person name="Taylor M.S."/>
            <person name="Tegner J."/>
            <person name="Teichmann S.A."/>
            <person name="Ueda H.R."/>
            <person name="van Nimwegen E."/>
            <person name="Verardo R."/>
            <person name="Wei C.L."/>
            <person name="Yagi K."/>
            <person name="Yamanishi H."/>
            <person name="Zabarovsky E."/>
            <person name="Zhu S."/>
            <person name="Zimmer A."/>
            <person name="Hide W."/>
            <person name="Bult C."/>
            <person name="Grimmond S.M."/>
            <person name="Teasdale R.D."/>
            <person name="Liu E.T."/>
            <person name="Brusic V."/>
            <person name="Quackenbush J."/>
            <person name="Wahlestedt C."/>
            <person name="Mattick J.S."/>
            <person name="Hume D.A."/>
            <person name="Kai C."/>
            <person name="Sasaki D."/>
            <person name="Tomaru Y."/>
            <person name="Fukuda S."/>
            <person name="Kanamori-Katayama M."/>
            <person name="Suzuki M."/>
            <person name="Aoki J."/>
            <person name="Arakawa T."/>
            <person name="Iida J."/>
            <person name="Imamura K."/>
            <person name="Itoh M."/>
            <person name="Kato T."/>
            <person name="Kawaji H."/>
            <person name="Kawagashira N."/>
            <person name="Kawashima T."/>
            <person name="Kojima M."/>
            <person name="Kondo S."/>
            <person name="Konno H."/>
            <person name="Nakano K."/>
            <person name="Ninomiya N."/>
            <person name="Nishio T."/>
            <person name="Okada M."/>
            <person name="Plessy C."/>
            <person name="Shibata K."/>
            <person name="Shiraki T."/>
            <person name="Suzuki S."/>
            <person name="Tagami M."/>
            <person name="Waki K."/>
            <person name="Watahiki A."/>
            <person name="Okamura-Oho Y."/>
            <person name="Suzuki H."/>
            <person name="Kawai J."/>
            <person name="Hayashizaki Y."/>
        </authorList>
    </citation>
    <scope>NUCLEOTIDE SEQUENCE [LARGE SCALE MRNA] (ISOFORMS 1; 3; 4 AND 5)</scope>
    <source>
        <strain>C57BL/6J</strain>
        <strain>NOD</strain>
        <tissue>Bone marrow</tissue>
        <tissue>Lung</tissue>
        <tissue>Spleen</tissue>
        <tissue>Testis</tissue>
        <tissue>Thymus</tissue>
    </source>
</reference>
<reference key="2">
    <citation type="journal article" date="2004" name="Genome Res.">
        <title>The status, quality, and expansion of the NIH full-length cDNA project: the Mammalian Gene Collection (MGC).</title>
        <authorList>
            <consortium name="The MGC Project Team"/>
        </authorList>
    </citation>
    <scope>NUCLEOTIDE SEQUENCE [LARGE SCALE MRNA] (ISOFORMS 2 AND 3)</scope>
    <source>
        <tissue>Eye</tissue>
    </source>
</reference>
<reference key="3">
    <citation type="journal article" date="2011" name="Cell Metab.">
        <title>The FBXL5-IRP2 axis is integral to control of iron metabolism in vivo.</title>
        <authorList>
            <person name="Moroishi T."/>
            <person name="Nishiyama M."/>
            <person name="Takeda Y."/>
            <person name="Iwai K."/>
            <person name="Nakayama K.I."/>
        </authorList>
    </citation>
    <scope>FUNCTION</scope>
    <scope>DISRUPTION PHENOTYPE</scope>
</reference>
<reference key="4">
    <citation type="journal article" date="2013" name="J. Biol. Chem.">
        <title>F-box and leucine-rich repeat protein 5 (FBXL5) is required for maintenance of cellular and systemic iron homeostasis.</title>
        <authorList>
            <person name="Ruiz J.C."/>
            <person name="Walker S.D."/>
            <person name="Anderson S.A."/>
            <person name="Eisenstein R.S."/>
            <person name="Bruick R.K."/>
        </authorList>
    </citation>
    <scope>FUNCTION</scope>
    <scope>DISRUPTION PHENOTYPE</scope>
    <scope>TISSUE SPECIFICITY</scope>
</reference>
<sequence>MAPFPDEVDVFTAPHWRMKQLVGRYCDKLSKTNFSNNNDFRALLQSLYATFKEFKMHEQIENEYIIGLLQQRSQTIYNVHSDNKLSEMLSLFEKGLKNVKNEYEQLNYAKQLKERLEAFTRDFLPHMKEEEEVFQPMLMEYFTYEELKDIKKKVIAQHCSQKDTAELLRGLSLWNQAEERQKVLKYSVDEKADTEAEVSEHSTGITHLPPEVMLSIFSYLNPQELCRCSQVSTKWSQLAKTGSLWKHLYPVHWARGDWYSGPATELDTEPDEEWVRNRKDESRAFQEWDEDADIDESEESAEESVAISIAQMEKRVLHGLIHNVLPYVGTSVKTLVLAYSSAVSSKMVRQILELCPNLEHLDLTQTDISDSAFDSWSWLGCCQSLRHLDLSGCEKITDMALEKISRALGVLTSHQSGFLKSAGKAASTPWTSKDITMPSTTQYACLHNLTDKGIGEEIDNEHSWTEPVSSESLTSPYVWMLDAEDLADIEDAVEWRHRNVESLCVMETASNFGCSSSGCYSKDIVGLRTSVCWQQHCASPAFAYCGHSFCCTGTALRTMTTLPATSAMCRKALRTTLPRGKDLIYFGSEKSDQETGRVLLFLSLSGCYQITDHGLRALTLGGGLPYLEHLNLSGCLTVTGAGLQDLVSACPSLNDEYFYYCDNINGPHADTASGCQNLQCGFRACCRSGE</sequence>
<comment type="function">
    <text evidence="2 4 5">Component of some SCF (SKP1-cullin-F-box) protein ligase complex that plays a central role in iron homeostasis by promoting the ubiquitination and subsequent degradation of IREB2/IRP2 (PubMed:21907140, PubMed:23135277). The C-terminal domain of FBXL5 contains a redox-sensitive [2Fe-2S] cluster that, upon oxidation, promotes binding to IRP2 to effect its oxygen-dependent degradation. Under iron deficiency conditions, the N-terminal hemerythrin-like (Hr) region, which contains a diiron metal center, cannot bind iron and undergoes conformational changes that destabilize the FBXL5 protein and cause its ubiquitination and degradation. When intracellular iron levels start rising, the Hr region is stabilized. Additional increases in iron levels facilitate the assembly and incorporation of a redox active [2Fe-2S] cluster in the C-terminal domain. Only when oxygen level is high enough to maintain the cluster in its oxidized state can FBXL5 recruit IRP2 as a substrate for polyubiquination and degradation. Promotes ubiquitination and subsequent degradation of the dynactin complex component DCTN1. Within the nucleus, promotes the ubiquitination of SNAI1; preventing its interaction with DNA and promoting its degradation. Negatively regulates DNA damage response by mediating the ubiquitin-proteasome degradation of the DNA repair protein NABP2 (By similarity).</text>
</comment>
<comment type="cofactor">
    <cofactor evidence="2">
        <name>[2Fe-2S] cluster</name>
        <dbReference type="ChEBI" id="CHEBI:190135"/>
    </cofactor>
</comment>
<comment type="activity regulation">
    <text evidence="2">An iron-sulfur cluster promotes IRP2 polyubiquitination and degradation in response to both iron and oxygen concentrations.</text>
</comment>
<comment type="pathway">
    <text>Protein modification; protein ubiquitination.</text>
</comment>
<comment type="subunit">
    <text evidence="2">Part of a SCF (SKP1-cullin-F-box) protein ligase complex. Interacts with ACO1/IRP1, IREB2/IRP2; the interaction depends on the [2Fe-2S] cluster. Interacts with DCTN1/p150-glued.</text>
</comment>
<comment type="subcellular location">
    <subcellularLocation>
        <location evidence="2">Cytoplasm</location>
        <location evidence="2">Perinuclear region</location>
    </subcellularLocation>
    <subcellularLocation>
        <location evidence="2">Nucleus</location>
    </subcellularLocation>
</comment>
<comment type="alternative products">
    <event type="alternative splicing"/>
    <isoform>
        <id>Q8C2S5-1</id>
        <name>1</name>
        <sequence type="displayed"/>
    </isoform>
    <isoform>
        <id>Q8C2S5-2</id>
        <name>2</name>
        <sequence type="described" ref="VSP_008418"/>
    </isoform>
    <isoform>
        <id>Q8C2S5-3</id>
        <name>3</name>
        <sequence type="described" ref="VSP_008419 VSP_008420"/>
    </isoform>
    <isoform>
        <id>Q8C2S5-4</id>
        <name>4</name>
        <sequence type="described" ref="VSP_038530"/>
    </isoform>
    <isoform>
        <id>Q8C2S5-5</id>
        <name>5</name>
        <sequence type="described" ref="VSP_038529 VSP_008419 VSP_008420"/>
    </isoform>
</comment>
<comment type="tissue specificity">
    <text evidence="5">Ubiquitously expressed. Highly expressed in early embryogenesis with expression decreasing as the embryo progresses through development (E11 and E15).</text>
</comment>
<comment type="domain">
    <text evidence="1">The hemerythrin-like region acts as an oxygen and iron sensor by binding oxygen through a diiron metal-center. In absence of oxygen and iron, the protein is ubiquitinated and degraded (By similarity).</text>
</comment>
<comment type="PTM">
    <text evidence="2">Polybiquitinated upon iron and oxygen depletion, leading to its degradation by the proteasome. Ubiquitination is regulated by the hemerythrin-like region that acts as an oxygen and iron sensor. Undergoes constitutive ubiquitin-dependent degradation at the steady state by HERC2.</text>
</comment>
<comment type="disruption phenotype">
    <text evidence="4 5">FBXL5-deletion mice die during early embryogenesis (PubMed:21907140, PubMed:23135277). FBXL5-null embryos accumulate excess ferrous iron and are exposed to damaging levels of oxidative stress (PubMed:21907140). Simultaneous inactivation of both the FBXL5 and IRP2 genes is sufficient to rescue embryonic lethality (PubMed:21907140).</text>
</comment>
<organism>
    <name type="scientific">Mus musculus</name>
    <name type="common">Mouse</name>
    <dbReference type="NCBI Taxonomy" id="10090"/>
    <lineage>
        <taxon>Eukaryota</taxon>
        <taxon>Metazoa</taxon>
        <taxon>Chordata</taxon>
        <taxon>Craniata</taxon>
        <taxon>Vertebrata</taxon>
        <taxon>Euteleostomi</taxon>
        <taxon>Mammalia</taxon>
        <taxon>Eutheria</taxon>
        <taxon>Euarchontoglires</taxon>
        <taxon>Glires</taxon>
        <taxon>Rodentia</taxon>
        <taxon>Myomorpha</taxon>
        <taxon>Muroidea</taxon>
        <taxon>Muridae</taxon>
        <taxon>Murinae</taxon>
        <taxon>Mus</taxon>
        <taxon>Mus</taxon>
    </lineage>
</organism>
<accession>Q8C2S5</accession>
<accession>Q14CG1</accession>
<accession>Q3TAK6</accession>
<accession>Q3TWC9</accession>
<accession>Q3UC66</accession>
<accession>Q80XI5</accession>
<accession>Q8BGF5</accession>
<accession>Q8BNL3</accession>
<accession>Q8C3Q8</accession>
<proteinExistence type="evidence at transcript level"/>
<name>FBXL5_MOUSE</name>
<keyword id="KW-0025">Alternative splicing</keyword>
<keyword id="KW-0963">Cytoplasm</keyword>
<keyword id="KW-0408">Iron</keyword>
<keyword id="KW-0411">Iron-sulfur</keyword>
<keyword id="KW-0433">Leucine-rich repeat</keyword>
<keyword id="KW-0479">Metal-binding</keyword>
<keyword id="KW-0539">Nucleus</keyword>
<keyword id="KW-1185">Reference proteome</keyword>
<keyword id="KW-0677">Repeat</keyword>
<keyword id="KW-0832">Ubl conjugation</keyword>
<keyword id="KW-0833">Ubl conjugation pathway</keyword>
<feature type="chain" id="PRO_0000119846" description="F-box/LRR-repeat protein 5">
    <location>
        <begin position="1"/>
        <end position="690"/>
    </location>
</feature>
<feature type="domain" description="F-box" evidence="3">
    <location>
        <begin position="202"/>
        <end position="248"/>
    </location>
</feature>
<feature type="repeat" description="LRR 1">
    <location>
        <begin position="340"/>
        <end position="364"/>
    </location>
</feature>
<feature type="repeat" description="LRR 2">
    <location>
        <begin position="365"/>
        <end position="392"/>
    </location>
</feature>
<feature type="repeat" description="LRR 3">
    <location>
        <begin position="393"/>
        <end position="418"/>
    </location>
</feature>
<feature type="repeat" description="LRR 4">
    <location>
        <begin position="478"/>
        <end position="507"/>
    </location>
</feature>
<feature type="repeat" description="LRR 5">
    <location>
        <begin position="575"/>
        <end position="606"/>
    </location>
</feature>
<feature type="repeat" description="LRR 6">
    <location>
        <begin position="607"/>
        <end position="634"/>
    </location>
</feature>
<feature type="repeat" description="LRR 7">
    <location>
        <begin position="635"/>
        <end position="660"/>
    </location>
</feature>
<feature type="region of interest" description="Hemerythrin-like" evidence="2">
    <location>
        <begin position="1"/>
        <end position="159"/>
    </location>
</feature>
<feature type="binding site" evidence="2">
    <location>
        <position position="15"/>
    </location>
    <ligand>
        <name>Fe(3+)</name>
        <dbReference type="ChEBI" id="CHEBI:29034"/>
        <label>1</label>
    </ligand>
</feature>
<feature type="binding site" evidence="2">
    <location>
        <position position="57"/>
    </location>
    <ligand>
        <name>Fe(3+)</name>
        <dbReference type="ChEBI" id="CHEBI:29034"/>
        <label>1</label>
    </ligand>
</feature>
<feature type="binding site" evidence="2">
    <location>
        <position position="58"/>
    </location>
    <ligand>
        <name>Fe(3+)</name>
        <dbReference type="ChEBI" id="CHEBI:29034"/>
        <label>2</label>
    </ligand>
</feature>
<feature type="binding site" evidence="2">
    <location>
        <position position="61"/>
    </location>
    <ligand>
        <name>Fe(3+)</name>
        <dbReference type="ChEBI" id="CHEBI:29034"/>
        <label>1</label>
    </ligand>
</feature>
<feature type="binding site" evidence="2">
    <location>
        <position position="61"/>
    </location>
    <ligand>
        <name>Fe(3+)</name>
        <dbReference type="ChEBI" id="CHEBI:29034"/>
        <label>2</label>
    </ligand>
</feature>
<feature type="binding site" evidence="2">
    <location>
        <position position="80"/>
    </location>
    <ligand>
        <name>Fe(3+)</name>
        <dbReference type="ChEBI" id="CHEBI:29034"/>
        <label>2</label>
    </ligand>
</feature>
<feature type="binding site" evidence="2">
    <location>
        <position position="126"/>
    </location>
    <ligand>
        <name>Fe(3+)</name>
        <dbReference type="ChEBI" id="CHEBI:29034"/>
        <label>2</label>
    </ligand>
</feature>
<feature type="binding site" evidence="2">
    <location>
        <position position="130"/>
    </location>
    <ligand>
        <name>Fe(3+)</name>
        <dbReference type="ChEBI" id="CHEBI:29034"/>
        <label>1</label>
    </ligand>
</feature>
<feature type="binding site" evidence="2">
    <location>
        <position position="130"/>
    </location>
    <ligand>
        <name>Fe(3+)</name>
        <dbReference type="ChEBI" id="CHEBI:29034"/>
        <label>2</label>
    </ligand>
</feature>
<feature type="binding site" evidence="2">
    <location>
        <position position="661"/>
    </location>
    <ligand>
        <name>[2Fe-2S] cluster</name>
        <dbReference type="ChEBI" id="CHEBI:190135"/>
    </ligand>
</feature>
<feature type="binding site" evidence="2">
    <location>
        <position position="675"/>
    </location>
    <ligand>
        <name>[2Fe-2S] cluster</name>
        <dbReference type="ChEBI" id="CHEBI:190135"/>
    </ligand>
</feature>
<feature type="binding site" evidence="2">
    <location>
        <position position="685"/>
    </location>
    <ligand>
        <name>[2Fe-2S] cluster</name>
        <dbReference type="ChEBI" id="CHEBI:190135"/>
    </ligand>
</feature>
<feature type="binding site" evidence="2">
    <location>
        <position position="686"/>
    </location>
    <ligand>
        <name>[2Fe-2S] cluster</name>
        <dbReference type="ChEBI" id="CHEBI:190135"/>
    </ligand>
</feature>
<feature type="splice variant" id="VSP_008418" description="In isoform 2." evidence="6">
    <original>MAPFPDEVDVFTAPHWRMKQLVGRYCDK</original>
    <variation>MRNNQELKYEIKWKHLDCSVVE</variation>
    <location>
        <begin position="1"/>
        <end position="28"/>
    </location>
</feature>
<feature type="splice variant" id="VSP_038529" description="In isoform 5." evidence="7">
    <location>
        <begin position="29"/>
        <end position="71"/>
    </location>
</feature>
<feature type="splice variant" id="VSP_038530" description="In isoform 4." evidence="7">
    <location>
        <position position="298"/>
    </location>
</feature>
<feature type="splice variant" id="VSP_008419" description="In isoform 3 and isoform 5." evidence="6 7">
    <original>ALTLGGG</original>
    <variation>WVISPSC</variation>
    <location>
        <begin position="617"/>
        <end position="623"/>
    </location>
</feature>
<feature type="splice variant" id="VSP_008420" description="In isoform 3 and isoform 5." evidence="6 7">
    <location>
        <begin position="624"/>
        <end position="690"/>
    </location>
</feature>
<feature type="sequence conflict" description="In Ref. 1; BAC38698." evidence="8" ref="1">
    <original>Q</original>
    <variation>R</variation>
    <location>
        <position position="105"/>
    </location>
</feature>
<feature type="sequence conflict" description="In Ref. 1; BAC40126." evidence="8" ref="1">
    <original>M</original>
    <variation>K</variation>
    <location>
        <position position="127"/>
    </location>
</feature>
<protein>
    <recommendedName>
        <fullName>F-box/LRR-repeat protein 5</fullName>
    </recommendedName>
    <alternativeName>
        <fullName>F-box and leucine-rich repeat protein 5</fullName>
    </alternativeName>
</protein>
<gene>
    <name type="primary">Fbxl5</name>
</gene>